<reference key="1">
    <citation type="journal article" date="2000" name="Cancer Lett.">
        <title>Seven genes that are differentially transcribed in colorectal tumor cell lines.</title>
        <authorList>
            <person name="Nimmrich I."/>
            <person name="Erdmann S."/>
            <person name="Melchers U."/>
            <person name="Finke U."/>
            <person name="Hentsch S."/>
            <person name="Moyer M.P."/>
            <person name="Hoffmann I."/>
            <person name="Mueller O."/>
        </authorList>
    </citation>
    <scope>NUCLEOTIDE SEQUENCE [MRNA] (ISOFORM 1)</scope>
</reference>
<reference key="2">
    <citation type="submission" date="2005-10" db="EMBL/GenBank/DDBJ databases">
        <authorList>
            <person name="Barbieri M.A."/>
            <person name="Hunker C.M."/>
        </authorList>
    </citation>
    <scope>NUCLEOTIDE SEQUENCE [MRNA] (ISOFORMS 1 AND 2)</scope>
    <source>
        <tissue>Cervix carcinoma</tissue>
    </source>
</reference>
<reference key="3">
    <citation type="submission" date="2003-05" db="EMBL/GenBank/DDBJ databases">
        <title>Cloning of human full-length CDSs in BD Creator(TM) system donor vector.</title>
        <authorList>
            <person name="Kalnine N."/>
            <person name="Chen X."/>
            <person name="Rolfs A."/>
            <person name="Halleck A."/>
            <person name="Hines L."/>
            <person name="Eisenstein S."/>
            <person name="Koundinya M."/>
            <person name="Raphael J."/>
            <person name="Moreira D."/>
            <person name="Kelley T."/>
            <person name="LaBaer J."/>
            <person name="Lin Y."/>
            <person name="Phelan M."/>
            <person name="Farmer A."/>
        </authorList>
    </citation>
    <scope>NUCLEOTIDE SEQUENCE [LARGE SCALE MRNA] (ISOFORM 1)</scope>
</reference>
<reference key="4">
    <citation type="journal article" date="2004" name="Nat. Genet.">
        <title>Complete sequencing and characterization of 21,243 full-length human cDNAs.</title>
        <authorList>
            <person name="Ota T."/>
            <person name="Suzuki Y."/>
            <person name="Nishikawa T."/>
            <person name="Otsuki T."/>
            <person name="Sugiyama T."/>
            <person name="Irie R."/>
            <person name="Wakamatsu A."/>
            <person name="Hayashi K."/>
            <person name="Sato H."/>
            <person name="Nagai K."/>
            <person name="Kimura K."/>
            <person name="Makita H."/>
            <person name="Sekine M."/>
            <person name="Obayashi M."/>
            <person name="Nishi T."/>
            <person name="Shibahara T."/>
            <person name="Tanaka T."/>
            <person name="Ishii S."/>
            <person name="Yamamoto J."/>
            <person name="Saito K."/>
            <person name="Kawai Y."/>
            <person name="Isono Y."/>
            <person name="Nakamura Y."/>
            <person name="Nagahari K."/>
            <person name="Murakami K."/>
            <person name="Yasuda T."/>
            <person name="Iwayanagi T."/>
            <person name="Wagatsuma M."/>
            <person name="Shiratori A."/>
            <person name="Sudo H."/>
            <person name="Hosoiri T."/>
            <person name="Kaku Y."/>
            <person name="Kodaira H."/>
            <person name="Kondo H."/>
            <person name="Sugawara M."/>
            <person name="Takahashi M."/>
            <person name="Kanda K."/>
            <person name="Yokoi T."/>
            <person name="Furuya T."/>
            <person name="Kikkawa E."/>
            <person name="Omura Y."/>
            <person name="Abe K."/>
            <person name="Kamihara K."/>
            <person name="Katsuta N."/>
            <person name="Sato K."/>
            <person name="Tanikawa M."/>
            <person name="Yamazaki M."/>
            <person name="Ninomiya K."/>
            <person name="Ishibashi T."/>
            <person name="Yamashita H."/>
            <person name="Murakawa K."/>
            <person name="Fujimori K."/>
            <person name="Tanai H."/>
            <person name="Kimata M."/>
            <person name="Watanabe M."/>
            <person name="Hiraoka S."/>
            <person name="Chiba Y."/>
            <person name="Ishida S."/>
            <person name="Ono Y."/>
            <person name="Takiguchi S."/>
            <person name="Watanabe S."/>
            <person name="Yosida M."/>
            <person name="Hotuta T."/>
            <person name="Kusano J."/>
            <person name="Kanehori K."/>
            <person name="Takahashi-Fujii A."/>
            <person name="Hara H."/>
            <person name="Tanase T.-O."/>
            <person name="Nomura Y."/>
            <person name="Togiya S."/>
            <person name="Komai F."/>
            <person name="Hara R."/>
            <person name="Takeuchi K."/>
            <person name="Arita M."/>
            <person name="Imose N."/>
            <person name="Musashino K."/>
            <person name="Yuuki H."/>
            <person name="Oshima A."/>
            <person name="Sasaki N."/>
            <person name="Aotsuka S."/>
            <person name="Yoshikawa Y."/>
            <person name="Matsunawa H."/>
            <person name="Ichihara T."/>
            <person name="Shiohata N."/>
            <person name="Sano S."/>
            <person name="Moriya S."/>
            <person name="Momiyama H."/>
            <person name="Satoh N."/>
            <person name="Takami S."/>
            <person name="Terashima Y."/>
            <person name="Suzuki O."/>
            <person name="Nakagawa S."/>
            <person name="Senoh A."/>
            <person name="Mizoguchi H."/>
            <person name="Goto Y."/>
            <person name="Shimizu F."/>
            <person name="Wakebe H."/>
            <person name="Hishigaki H."/>
            <person name="Watanabe T."/>
            <person name="Sugiyama A."/>
            <person name="Takemoto M."/>
            <person name="Kawakami B."/>
            <person name="Yamazaki M."/>
            <person name="Watanabe K."/>
            <person name="Kumagai A."/>
            <person name="Itakura S."/>
            <person name="Fukuzumi Y."/>
            <person name="Fujimori Y."/>
            <person name="Komiyama M."/>
            <person name="Tashiro H."/>
            <person name="Tanigami A."/>
            <person name="Fujiwara T."/>
            <person name="Ono T."/>
            <person name="Yamada K."/>
            <person name="Fujii Y."/>
            <person name="Ozaki K."/>
            <person name="Hirao M."/>
            <person name="Ohmori Y."/>
            <person name="Kawabata A."/>
            <person name="Hikiji T."/>
            <person name="Kobatake N."/>
            <person name="Inagaki H."/>
            <person name="Ikema Y."/>
            <person name="Okamoto S."/>
            <person name="Okitani R."/>
            <person name="Kawakami T."/>
            <person name="Noguchi S."/>
            <person name="Itoh T."/>
            <person name="Shigeta K."/>
            <person name="Senba T."/>
            <person name="Matsumura K."/>
            <person name="Nakajima Y."/>
            <person name="Mizuno T."/>
            <person name="Morinaga M."/>
            <person name="Sasaki M."/>
            <person name="Togashi T."/>
            <person name="Oyama M."/>
            <person name="Hata H."/>
            <person name="Watanabe M."/>
            <person name="Komatsu T."/>
            <person name="Mizushima-Sugano J."/>
            <person name="Satoh T."/>
            <person name="Shirai Y."/>
            <person name="Takahashi Y."/>
            <person name="Nakagawa K."/>
            <person name="Okumura K."/>
            <person name="Nagase T."/>
            <person name="Nomura N."/>
            <person name="Kikuchi H."/>
            <person name="Masuho Y."/>
            <person name="Yamashita R."/>
            <person name="Nakai K."/>
            <person name="Yada T."/>
            <person name="Nakamura Y."/>
            <person name="Ohara O."/>
            <person name="Isogai T."/>
            <person name="Sugano S."/>
        </authorList>
    </citation>
    <scope>NUCLEOTIDE SEQUENCE [LARGE SCALE MRNA] (ISOFORMS 1 AND 3)</scope>
    <source>
        <tissue>Brain</tissue>
        <tissue>Testis</tissue>
    </source>
</reference>
<reference key="5">
    <citation type="submission" date="2005-04" db="EMBL/GenBank/DDBJ databases">
        <authorList>
            <person name="Suzuki Y."/>
            <person name="Sugano S."/>
            <person name="Totoki Y."/>
            <person name="Toyoda A."/>
            <person name="Takeda T."/>
            <person name="Sakaki Y."/>
            <person name="Tanaka A."/>
            <person name="Yokoyama S."/>
        </authorList>
    </citation>
    <scope>NUCLEOTIDE SEQUENCE [LARGE SCALE MRNA] (ISOFORM 1)</scope>
    <source>
        <tissue>Testis</tissue>
    </source>
</reference>
<reference key="6">
    <citation type="journal article" date="2003" name="Nature">
        <title>The DNA sequence of human chromosome 7.</title>
        <authorList>
            <person name="Hillier L.W."/>
            <person name="Fulton R.S."/>
            <person name="Fulton L.A."/>
            <person name="Graves T.A."/>
            <person name="Pepin K.H."/>
            <person name="Wagner-McPherson C."/>
            <person name="Layman D."/>
            <person name="Maas J."/>
            <person name="Jaeger S."/>
            <person name="Walker R."/>
            <person name="Wylie K."/>
            <person name="Sekhon M."/>
            <person name="Becker M.C."/>
            <person name="O'Laughlin M.D."/>
            <person name="Schaller M.E."/>
            <person name="Fewell G.A."/>
            <person name="Delehaunty K.D."/>
            <person name="Miner T.L."/>
            <person name="Nash W.E."/>
            <person name="Cordes M."/>
            <person name="Du H."/>
            <person name="Sun H."/>
            <person name="Edwards J."/>
            <person name="Bradshaw-Cordum H."/>
            <person name="Ali J."/>
            <person name="Andrews S."/>
            <person name="Isak A."/>
            <person name="Vanbrunt A."/>
            <person name="Nguyen C."/>
            <person name="Du F."/>
            <person name="Lamar B."/>
            <person name="Courtney L."/>
            <person name="Kalicki J."/>
            <person name="Ozersky P."/>
            <person name="Bielicki L."/>
            <person name="Scott K."/>
            <person name="Holmes A."/>
            <person name="Harkins R."/>
            <person name="Harris A."/>
            <person name="Strong C.M."/>
            <person name="Hou S."/>
            <person name="Tomlinson C."/>
            <person name="Dauphin-Kohlberg S."/>
            <person name="Kozlowicz-Reilly A."/>
            <person name="Leonard S."/>
            <person name="Rohlfing T."/>
            <person name="Rock S.M."/>
            <person name="Tin-Wollam A.-M."/>
            <person name="Abbott A."/>
            <person name="Minx P."/>
            <person name="Maupin R."/>
            <person name="Strowmatt C."/>
            <person name="Latreille P."/>
            <person name="Miller N."/>
            <person name="Johnson D."/>
            <person name="Murray J."/>
            <person name="Woessner J.P."/>
            <person name="Wendl M.C."/>
            <person name="Yang S.-P."/>
            <person name="Schultz B.R."/>
            <person name="Wallis J.W."/>
            <person name="Spieth J."/>
            <person name="Bieri T.A."/>
            <person name="Nelson J.O."/>
            <person name="Berkowicz N."/>
            <person name="Wohldmann P.E."/>
            <person name="Cook L.L."/>
            <person name="Hickenbotham M.T."/>
            <person name="Eldred J."/>
            <person name="Williams D."/>
            <person name="Bedell J.A."/>
            <person name="Mardis E.R."/>
            <person name="Clifton S.W."/>
            <person name="Chissoe S.L."/>
            <person name="Marra M.A."/>
            <person name="Raymond C."/>
            <person name="Haugen E."/>
            <person name="Gillett W."/>
            <person name="Zhou Y."/>
            <person name="James R."/>
            <person name="Phelps K."/>
            <person name="Iadanoto S."/>
            <person name="Bubb K."/>
            <person name="Simms E."/>
            <person name="Levy R."/>
            <person name="Clendenning J."/>
            <person name="Kaul R."/>
            <person name="Kent W.J."/>
            <person name="Furey T.S."/>
            <person name="Baertsch R.A."/>
            <person name="Brent M.R."/>
            <person name="Keibler E."/>
            <person name="Flicek P."/>
            <person name="Bork P."/>
            <person name="Suyama M."/>
            <person name="Bailey J.A."/>
            <person name="Portnoy M.E."/>
            <person name="Torrents D."/>
            <person name="Chinwalla A.T."/>
            <person name="Gish W.R."/>
            <person name="Eddy S.R."/>
            <person name="McPherson J.D."/>
            <person name="Olson M.V."/>
            <person name="Eichler E.E."/>
            <person name="Green E.D."/>
            <person name="Waterston R.H."/>
            <person name="Wilson R.K."/>
        </authorList>
    </citation>
    <scope>NUCLEOTIDE SEQUENCE [LARGE SCALE GENOMIC DNA]</scope>
</reference>
<reference key="7">
    <citation type="journal article" date="2004" name="Genome Res.">
        <title>The status, quality, and expansion of the NIH full-length cDNA project: the Mammalian Gene Collection (MGC).</title>
        <authorList>
            <consortium name="The MGC Project Team"/>
        </authorList>
    </citation>
    <scope>NUCLEOTIDE SEQUENCE [LARGE SCALE MRNA] (ISOFORM 1)</scope>
    <source>
        <tissue>Lymph</tissue>
    </source>
</reference>
<reference key="8">
    <citation type="journal article" date="1997" name="Cell">
        <title>A novel Rab5 GDP/GTP exchange factor complexed to Rabaptin-5 links nucleotide exchange to effector recruitment and function.</title>
        <authorList>
            <person name="Horiuchi H."/>
            <person name="Lippe R."/>
            <person name="McBride H.M."/>
            <person name="Rubino M."/>
            <person name="Woodman P."/>
            <person name="Stenmark H."/>
            <person name="Rybin V."/>
            <person name="Wilm M."/>
            <person name="Ashman K."/>
            <person name="Mann M."/>
            <person name="Zerial M."/>
        </authorList>
    </citation>
    <scope>FUNCTION</scope>
    <scope>INTERACTION WITH RABEP1</scope>
</reference>
<reference key="9">
    <citation type="journal article" date="2001" name="Mol. Biol. Cell">
        <title>Functional synergy between Rab5 effector Rabaptin-5 and exchange factor Rabex-5 when physically associated in a complex.</title>
        <authorList>
            <person name="Lippe R."/>
            <person name="Miaczynska M."/>
            <person name="Rybin V."/>
            <person name="Runge A."/>
            <person name="Zerial M."/>
        </authorList>
    </citation>
    <scope>FUNCTION</scope>
    <scope>INTERACTION WITH RABEP1</scope>
</reference>
<reference key="10">
    <citation type="journal article" date="2003" name="EMBO J.">
        <title>Divalent interaction of the GGAs with the Rabaptin-5-Rabex-5 complex.</title>
        <authorList>
            <person name="Mattera R."/>
            <person name="Arighi C.N."/>
            <person name="Lodge R."/>
            <person name="Zerial M."/>
            <person name="Bonifacino J.S."/>
        </authorList>
    </citation>
    <scope>INTERACTION WITH GGA1; GGA2; GGA3; AP1G1 AND AP1G2</scope>
    <scope>SUBCELLULAR LOCATION</scope>
</reference>
<reference key="11">
    <citation type="journal article" date="2008" name="J. Proteome Res.">
        <title>Phosphoproteome of resting human platelets.</title>
        <authorList>
            <person name="Zahedi R.P."/>
            <person name="Lewandrowski U."/>
            <person name="Wiesner J."/>
            <person name="Wortelkamp S."/>
            <person name="Moebius J."/>
            <person name="Schuetz C."/>
            <person name="Walter U."/>
            <person name="Gambaryan S."/>
            <person name="Sickmann A."/>
        </authorList>
    </citation>
    <scope>IDENTIFICATION BY MASS SPECTROMETRY [LARGE SCALE ANALYSIS]</scope>
    <source>
        <tissue>Platelet</tissue>
    </source>
</reference>
<reference key="12">
    <citation type="journal article" date="2008" name="Mol. Cell">
        <title>Kinase-selective enrichment enables quantitative phosphoproteomics of the kinome across the cell cycle.</title>
        <authorList>
            <person name="Daub H."/>
            <person name="Olsen J.V."/>
            <person name="Bairlein M."/>
            <person name="Gnad F."/>
            <person name="Oppermann F.S."/>
            <person name="Korner R."/>
            <person name="Greff Z."/>
            <person name="Keri G."/>
            <person name="Stemmann O."/>
            <person name="Mann M."/>
        </authorList>
    </citation>
    <scope>IDENTIFICATION BY MASS SPECTROMETRY [LARGE SCALE ANALYSIS]</scope>
    <source>
        <tissue>Cervix carcinoma</tissue>
    </source>
</reference>
<reference key="13">
    <citation type="journal article" date="2008" name="Proc. Natl. Acad. Sci. U.S.A.">
        <title>A quantitative atlas of mitotic phosphorylation.</title>
        <authorList>
            <person name="Dephoure N."/>
            <person name="Zhou C."/>
            <person name="Villen J."/>
            <person name="Beausoleil S.A."/>
            <person name="Bakalarski C.E."/>
            <person name="Elledge S.J."/>
            <person name="Gygi S.P."/>
        </authorList>
    </citation>
    <scope>PHOSPHORYLATION [LARGE SCALE ANALYSIS] AT SER-124</scope>
    <scope>IDENTIFICATION BY MASS SPECTROMETRY [LARGE SCALE ANALYSIS]</scope>
    <source>
        <tissue>Cervix carcinoma</tissue>
    </source>
</reference>
<reference key="14">
    <citation type="journal article" date="2009" name="Sci. Signal.">
        <title>Quantitative phosphoproteomic analysis of T cell receptor signaling reveals system-wide modulation of protein-protein interactions.</title>
        <authorList>
            <person name="Mayya V."/>
            <person name="Lundgren D.H."/>
            <person name="Hwang S.-I."/>
            <person name="Rezaul K."/>
            <person name="Wu L."/>
            <person name="Eng J.K."/>
            <person name="Rodionov V."/>
            <person name="Han D.K."/>
        </authorList>
    </citation>
    <scope>IDENTIFICATION BY MASS SPECTROMETRY [LARGE SCALE ANALYSIS]</scope>
    <source>
        <tissue>Leukemic T-cell</tissue>
    </source>
</reference>
<reference key="15">
    <citation type="journal article" date="2009" name="Science">
        <title>Lysine acetylation targets protein complexes and co-regulates major cellular functions.</title>
        <authorList>
            <person name="Choudhary C."/>
            <person name="Kumar C."/>
            <person name="Gnad F."/>
            <person name="Nielsen M.L."/>
            <person name="Rehman M."/>
            <person name="Walther T.C."/>
            <person name="Olsen J.V."/>
            <person name="Mann M."/>
        </authorList>
    </citation>
    <scope>ACETYLATION [LARGE SCALE ANALYSIS] AT LYS-151 AND LYS-170</scope>
    <scope>IDENTIFICATION BY MASS SPECTROMETRY [LARGE SCALE ANALYSIS]</scope>
</reference>
<reference key="16">
    <citation type="journal article" date="2010" name="Sci. Signal.">
        <title>Quantitative phosphoproteomics reveals widespread full phosphorylation site occupancy during mitosis.</title>
        <authorList>
            <person name="Olsen J.V."/>
            <person name="Vermeulen M."/>
            <person name="Santamaria A."/>
            <person name="Kumar C."/>
            <person name="Miller M.L."/>
            <person name="Jensen L.J."/>
            <person name="Gnad F."/>
            <person name="Cox J."/>
            <person name="Jensen T.S."/>
            <person name="Nigg E.A."/>
            <person name="Brunak S."/>
            <person name="Mann M."/>
        </authorList>
    </citation>
    <scope>PHOSPHORYLATION [LARGE SCALE ANALYSIS] AT SER-373 AND SER-377</scope>
    <scope>IDENTIFICATION BY MASS SPECTROMETRY [LARGE SCALE ANALYSIS]</scope>
    <source>
        <tissue>Cervix carcinoma</tissue>
    </source>
</reference>
<reference key="17">
    <citation type="journal article" date="2013" name="J. Proteome Res.">
        <title>Toward a comprehensive characterization of a human cancer cell phosphoproteome.</title>
        <authorList>
            <person name="Zhou H."/>
            <person name="Di Palma S."/>
            <person name="Preisinger C."/>
            <person name="Peng M."/>
            <person name="Polat A.N."/>
            <person name="Heck A.J."/>
            <person name="Mohammed S."/>
        </authorList>
    </citation>
    <scope>PHOSPHORYLATION [LARGE SCALE ANALYSIS] AT SER-124 AND SER-400</scope>
    <scope>IDENTIFICATION BY MASS SPECTROMETRY [LARGE SCALE ANALYSIS]</scope>
    <source>
        <tissue>Cervix carcinoma</tissue>
        <tissue>Erythroleukemia</tissue>
    </source>
</reference>
<reference key="18">
    <citation type="journal article" date="2014" name="J. Proteomics">
        <title>An enzyme assisted RP-RPLC approach for in-depth analysis of human liver phosphoproteome.</title>
        <authorList>
            <person name="Bian Y."/>
            <person name="Song C."/>
            <person name="Cheng K."/>
            <person name="Dong M."/>
            <person name="Wang F."/>
            <person name="Huang J."/>
            <person name="Sun D."/>
            <person name="Wang L."/>
            <person name="Ye M."/>
            <person name="Zou H."/>
        </authorList>
    </citation>
    <scope>PHOSPHORYLATION [LARGE SCALE ANALYSIS] AT SER-132</scope>
    <scope>IDENTIFICATION BY MASS SPECTROMETRY [LARGE SCALE ANALYSIS]</scope>
    <source>
        <tissue>Liver</tissue>
    </source>
</reference>
<reference key="19">
    <citation type="journal article" date="2004" name="Cell">
        <title>Structure, exchange determinants, and family-wide rab specificity of the tandem helical bundle and Vps9 domains of Rabex-5.</title>
        <authorList>
            <person name="Delprato A."/>
            <person name="Merithew E."/>
            <person name="Lambright D.G."/>
        </authorList>
    </citation>
    <scope>X-RAY CRYSTALLOGRAPHY (2.35 ANGSTROMS) OF 134-387</scope>
    <scope>FUNCTION</scope>
    <scope>INTERACTION WITH RAB5; RAB21 AND RAB22</scope>
    <scope>MUTAGENESIS OF ASP-313; PRO-317; TYR-354 AND THR-357</scope>
</reference>
<reference key="20">
    <citation type="journal article" date="2006" name="Cell">
        <title>Crystal structure of the ubiquitin binding domains of rabex-5 reveals two modes of interaction with ubiquitin.</title>
        <authorList>
            <person name="Penengo L."/>
            <person name="Mapelli M."/>
            <person name="Murachelli A.G."/>
            <person name="Confalonieri S."/>
            <person name="Magri L."/>
            <person name="Musacchio A."/>
            <person name="Di Fiore P.P."/>
            <person name="Polo S."/>
            <person name="Schneider T.R."/>
        </authorList>
    </citation>
    <scope>X-RAY CRYSTALLOGRAPHY (2.1 ANGSTROMS) OF 17-74 IN COMPLEX WITH UBIQUITIN</scope>
    <scope>UBIQUITINATION</scope>
    <scope>MUTAGENESIS OF ALA-58</scope>
</reference>
<reference key="21">
    <citation type="journal article" date="2007" name="Nat. Struct. Mol. Biol.">
        <title>Structural basis for Rab GTPase activation by VPS9 domain exchange factors.</title>
        <authorList>
            <person name="Delprato A."/>
            <person name="Lambright D.G."/>
        </authorList>
    </citation>
    <scope>X-RAY CRYSTALLOGRAPHY (2.1 ANGSTROMS) OF 134-387 IN COMPLEX WITH RAB21</scope>
</reference>
<feature type="chain" id="PRO_0000191315" description="Rab5 GDP/GTP exchange factor">
    <location>
        <begin position="1"/>
        <end position="491"/>
    </location>
</feature>
<feature type="domain" description="VPS9" evidence="4">
    <location>
        <begin position="232"/>
        <end position="375"/>
    </location>
</feature>
<feature type="zinc finger region" description="A20-type" evidence="3">
    <location>
        <begin position="13"/>
        <end position="47"/>
    </location>
</feature>
<feature type="region of interest" description="Interaction with ubiquitinated proteins">
    <location>
        <begin position="1"/>
        <end position="74"/>
    </location>
</feature>
<feature type="region of interest" description="Disordered" evidence="5">
    <location>
        <begin position="66"/>
        <end position="85"/>
    </location>
</feature>
<feature type="region of interest" description="Disordered" evidence="5">
    <location>
        <begin position="462"/>
        <end position="491"/>
    </location>
</feature>
<feature type="compositionally biased region" description="Low complexity" evidence="5">
    <location>
        <begin position="69"/>
        <end position="84"/>
    </location>
</feature>
<feature type="binding site" evidence="3">
    <location>
        <position position="19"/>
    </location>
    <ligand>
        <name>Zn(2+)</name>
        <dbReference type="ChEBI" id="CHEBI:29105"/>
    </ligand>
</feature>
<feature type="binding site" evidence="3">
    <location>
        <position position="23"/>
    </location>
    <ligand>
        <name>Zn(2+)</name>
        <dbReference type="ChEBI" id="CHEBI:29105"/>
    </ligand>
</feature>
<feature type="binding site" evidence="3">
    <location>
        <position position="35"/>
    </location>
    <ligand>
        <name>Zn(2+)</name>
        <dbReference type="ChEBI" id="CHEBI:29105"/>
    </ligand>
</feature>
<feature type="binding site" evidence="3">
    <location>
        <position position="38"/>
    </location>
    <ligand>
        <name>Zn(2+)</name>
        <dbReference type="ChEBI" id="CHEBI:29105"/>
    </ligand>
</feature>
<feature type="modified residue" description="Phosphoserine" evidence="13 16">
    <location>
        <position position="124"/>
    </location>
</feature>
<feature type="modified residue" description="Phosphoserine" evidence="17">
    <location>
        <position position="132"/>
    </location>
</feature>
<feature type="modified residue" description="N6-acetyllysine" evidence="14">
    <location>
        <position position="151"/>
    </location>
</feature>
<feature type="modified residue" description="N6-acetyllysine" evidence="14">
    <location>
        <position position="170"/>
    </location>
</feature>
<feature type="modified residue" description="Phosphoserine" evidence="15">
    <location>
        <position position="373"/>
    </location>
</feature>
<feature type="modified residue" description="Phosphoserine" evidence="15">
    <location>
        <position position="377"/>
    </location>
</feature>
<feature type="modified residue" description="Phosphoserine" evidence="2">
    <location>
        <position position="390"/>
    </location>
</feature>
<feature type="modified residue" description="Phosphoserine" evidence="16">
    <location>
        <position position="400"/>
    </location>
</feature>
<feature type="splice variant" id="VSP_060130" description="In isoform 3.">
    <original>M</original>
    <variation>MMASSYHEVVSRKKM</variation>
    <location>
        <position position="1"/>
    </location>
</feature>
<feature type="splice variant" id="VSP_060131" description="In isoform 2.">
    <original>R</original>
    <variation>RALLCYPGWSAMVQFQLTATSASWAQVILLLQPPKWLGLQK</variation>
    <location>
        <position position="60"/>
    </location>
</feature>
<feature type="mutagenesis site" description="Reduces affinity for ubiquitin 3-fold." evidence="9">
    <original>A</original>
    <variation>G</variation>
    <location>
        <position position="58"/>
    </location>
</feature>
<feature type="mutagenesis site" description="Strongly reduced activity." evidence="8">
    <original>D</original>
    <variation>A</variation>
    <location>
        <position position="313"/>
    </location>
</feature>
<feature type="mutagenesis site" description="Strongly reduced activity." evidence="8">
    <original>P</original>
    <variation>A</variation>
    <location>
        <position position="317"/>
    </location>
</feature>
<feature type="mutagenesis site" description="Strongly reduced activity." evidence="8">
    <original>Y</original>
    <variation>A</variation>
    <location>
        <position position="354"/>
    </location>
</feature>
<feature type="mutagenesis site" description="Strongly reduced activity." evidence="8">
    <original>T</original>
    <variation>A</variation>
    <location>
        <position position="357"/>
    </location>
</feature>
<feature type="sequence conflict" description="In Ref. 5; BAD97049." evidence="12" ref="5">
    <original>K</original>
    <variation>R</variation>
    <location>
        <position position="270"/>
    </location>
</feature>
<feature type="strand" evidence="18">
    <location>
        <begin position="23"/>
        <end position="25"/>
    </location>
</feature>
<feature type="helix" evidence="18">
    <location>
        <begin position="29"/>
        <end position="31"/>
    </location>
</feature>
<feature type="helix" evidence="18">
    <location>
        <begin position="36"/>
        <end position="70"/>
    </location>
</feature>
<feature type="helix" evidence="19">
    <location>
        <begin position="140"/>
        <end position="147"/>
    </location>
</feature>
<feature type="helix" evidence="19">
    <location>
        <begin position="150"/>
        <end position="168"/>
    </location>
</feature>
<feature type="turn" evidence="19">
    <location>
        <begin position="169"/>
        <end position="172"/>
    </location>
</feature>
<feature type="helix" evidence="19">
    <location>
        <begin position="175"/>
        <end position="194"/>
    </location>
</feature>
<feature type="helix" evidence="19">
    <location>
        <begin position="201"/>
        <end position="223"/>
    </location>
</feature>
<feature type="helix" evidence="19">
    <location>
        <begin position="231"/>
        <end position="244"/>
    </location>
</feature>
<feature type="turn" evidence="19">
    <location>
        <begin position="245"/>
        <end position="247"/>
    </location>
</feature>
<feature type="turn" evidence="19">
    <location>
        <begin position="250"/>
        <end position="254"/>
    </location>
</feature>
<feature type="helix" evidence="19">
    <location>
        <begin position="262"/>
        <end position="277"/>
    </location>
</feature>
<feature type="helix" evidence="19">
    <location>
        <begin position="278"/>
        <end position="280"/>
    </location>
</feature>
<feature type="helix" evidence="19">
    <location>
        <begin position="284"/>
        <end position="306"/>
    </location>
</feature>
<feature type="helix" evidence="19">
    <location>
        <begin position="312"/>
        <end position="326"/>
    </location>
</feature>
<feature type="helix" evidence="19">
    <location>
        <begin position="331"/>
        <end position="341"/>
    </location>
</feature>
<feature type="turn" evidence="19">
    <location>
        <begin position="344"/>
        <end position="348"/>
    </location>
</feature>
<feature type="helix" evidence="19">
    <location>
        <begin position="351"/>
        <end position="368"/>
    </location>
</feature>
<feature type="helix" evidence="19">
    <location>
        <begin position="372"/>
        <end position="374"/>
    </location>
</feature>
<feature type="helix" evidence="19">
    <location>
        <begin position="378"/>
        <end position="385"/>
    </location>
</feature>
<feature type="helix" evidence="20">
    <location>
        <begin position="409"/>
        <end position="415"/>
    </location>
</feature>
<feature type="helix" evidence="20">
    <location>
        <begin position="417"/>
        <end position="452"/>
    </location>
</feature>
<accession>Q9UJ41</accession>
<accession>B4DZM7</accession>
<accession>Q3HKR2</accession>
<accession>Q3HKR3</accession>
<accession>Q53FG0</accession>
<dbReference type="EMBL" id="AJ250042">
    <property type="protein sequence ID" value="CAB57359.1"/>
    <property type="molecule type" value="mRNA"/>
</dbReference>
<dbReference type="EMBL" id="DQ230533">
    <property type="protein sequence ID" value="ABA64473.1"/>
    <property type="molecule type" value="mRNA"/>
</dbReference>
<dbReference type="EMBL" id="DQ230534">
    <property type="protein sequence ID" value="ABA64474.1"/>
    <property type="molecule type" value="mRNA"/>
</dbReference>
<dbReference type="EMBL" id="BT007107">
    <property type="protein sequence ID" value="AAP35771.1"/>
    <property type="molecule type" value="mRNA"/>
</dbReference>
<dbReference type="EMBL" id="AK127790">
    <property type="protein sequence ID" value="BAC87138.1"/>
    <property type="status" value="ALT_SEQ"/>
    <property type="molecule type" value="mRNA"/>
</dbReference>
<dbReference type="EMBL" id="AK303006">
    <property type="protein sequence ID" value="BAG64139.1"/>
    <property type="molecule type" value="mRNA"/>
</dbReference>
<dbReference type="EMBL" id="AK223329">
    <property type="protein sequence ID" value="BAD97049.1"/>
    <property type="molecule type" value="mRNA"/>
</dbReference>
<dbReference type="EMBL" id="AC027644">
    <property type="protein sequence ID" value="AAQ93362.1"/>
    <property type="molecule type" value="Genomic_DNA"/>
</dbReference>
<dbReference type="EMBL" id="AC079588">
    <property type="status" value="NOT_ANNOTATED_CDS"/>
    <property type="molecule type" value="Genomic_DNA"/>
</dbReference>
<dbReference type="EMBL" id="BC015330">
    <property type="protein sequence ID" value="AAH15330.1"/>
    <property type="molecule type" value="mRNA"/>
</dbReference>
<dbReference type="CCDS" id="CCDS5535.1">
    <molecule id="Q9UJ41-2"/>
</dbReference>
<dbReference type="RefSeq" id="NP_001273989.1">
    <property type="nucleotide sequence ID" value="NM_001287060.1"/>
</dbReference>
<dbReference type="RefSeq" id="NP_001273990.1">
    <molecule id="Q9UJ41-4"/>
    <property type="nucleotide sequence ID" value="NM_001287061.2"/>
</dbReference>
<dbReference type="RefSeq" id="NP_001273991.1">
    <molecule id="Q9UJ41-2"/>
    <property type="nucleotide sequence ID" value="NM_001287062.2"/>
</dbReference>
<dbReference type="RefSeq" id="NP_001354654.1">
    <molecule id="Q9UJ41-2"/>
    <property type="nucleotide sequence ID" value="NM_001367725.1"/>
</dbReference>
<dbReference type="RefSeq" id="NP_001354655.1">
    <molecule id="Q9UJ41-2"/>
    <property type="nucleotide sequence ID" value="NM_001367726.1"/>
</dbReference>
<dbReference type="RefSeq" id="NP_001354656.1">
    <molecule id="Q9UJ41-2"/>
    <property type="nucleotide sequence ID" value="NM_001367727.1"/>
</dbReference>
<dbReference type="RefSeq" id="NP_001354657.1">
    <molecule id="Q9UJ41-2"/>
    <property type="nucleotide sequence ID" value="NM_001367728.1"/>
</dbReference>
<dbReference type="RefSeq" id="NP_001354658.1">
    <molecule id="Q9UJ41-2"/>
    <property type="nucleotide sequence ID" value="NM_001367729.1"/>
</dbReference>
<dbReference type="RefSeq" id="NP_001354659.1">
    <molecule id="Q9UJ41-2"/>
    <property type="nucleotide sequence ID" value="NM_001367730.1"/>
</dbReference>
<dbReference type="RefSeq" id="NP_001354660.1">
    <molecule id="Q9UJ41-2"/>
    <property type="nucleotide sequence ID" value="NM_001367731.1"/>
</dbReference>
<dbReference type="RefSeq" id="NP_001354661.1">
    <molecule id="Q9UJ41-2"/>
    <property type="nucleotide sequence ID" value="NM_001367732.1"/>
</dbReference>
<dbReference type="RefSeq" id="NP_001354662.1">
    <molecule id="Q9UJ41-2"/>
    <property type="nucleotide sequence ID" value="NM_001367733.1"/>
</dbReference>
<dbReference type="RefSeq" id="NP_001354663.1">
    <molecule id="Q9UJ41-2"/>
    <property type="nucleotide sequence ID" value="NM_001367734.1"/>
</dbReference>
<dbReference type="RefSeq" id="NP_001354664.1">
    <molecule id="Q9UJ41-2"/>
    <property type="nucleotide sequence ID" value="NM_001367735.1"/>
</dbReference>
<dbReference type="RefSeq" id="NP_001354665.1">
    <molecule id="Q9UJ41-2"/>
    <property type="nucleotide sequence ID" value="NM_001367736.1"/>
</dbReference>
<dbReference type="RefSeq" id="NP_055319.1">
    <molecule id="Q9UJ41-2"/>
    <property type="nucleotide sequence ID" value="NM_014504.3"/>
</dbReference>
<dbReference type="PDB" id="1TXU">
    <property type="method" value="X-ray"/>
    <property type="resolution" value="2.35 A"/>
    <property type="chains" value="A=134-387"/>
</dbReference>
<dbReference type="PDB" id="2C7M">
    <property type="method" value="X-ray"/>
    <property type="resolution" value="2.40 A"/>
    <property type="chains" value="A=17-74"/>
</dbReference>
<dbReference type="PDB" id="2C7N">
    <property type="method" value="X-ray"/>
    <property type="resolution" value="2.10 A"/>
    <property type="chains" value="A/C/E/G/I/K=17-74"/>
</dbReference>
<dbReference type="PDB" id="2OT3">
    <property type="method" value="X-ray"/>
    <property type="resolution" value="2.10 A"/>
    <property type="chains" value="A=134-387"/>
</dbReference>
<dbReference type="PDB" id="4N3X">
    <property type="method" value="X-ray"/>
    <property type="resolution" value="2.00 A"/>
    <property type="chains" value="A/B/C/D=409-455"/>
</dbReference>
<dbReference type="PDB" id="4N3Y">
    <property type="method" value="X-ray"/>
    <property type="resolution" value="2.20 A"/>
    <property type="chains" value="A=413-455"/>
</dbReference>
<dbReference type="PDB" id="4N3Z">
    <property type="method" value="X-ray"/>
    <property type="resolution" value="3.10 A"/>
    <property type="chains" value="A=134-452"/>
</dbReference>
<dbReference type="PDB" id="4Q9U">
    <property type="method" value="X-ray"/>
    <property type="resolution" value="4.62 A"/>
    <property type="chains" value="A/E=134-452"/>
</dbReference>
<dbReference type="PDBsum" id="1TXU"/>
<dbReference type="PDBsum" id="2C7M"/>
<dbReference type="PDBsum" id="2C7N"/>
<dbReference type="PDBsum" id="2OT3"/>
<dbReference type="PDBsum" id="4N3X"/>
<dbReference type="PDBsum" id="4N3Y"/>
<dbReference type="PDBsum" id="4N3Z"/>
<dbReference type="PDBsum" id="4Q9U"/>
<dbReference type="SMR" id="Q9UJ41"/>
<dbReference type="BioGRID" id="118154">
    <property type="interactions" value="201"/>
</dbReference>
<dbReference type="CORUM" id="Q9UJ41"/>
<dbReference type="DIP" id="DIP-29348N"/>
<dbReference type="FunCoup" id="Q9UJ41">
    <property type="interactions" value="1332"/>
</dbReference>
<dbReference type="IntAct" id="Q9UJ41">
    <property type="interactions" value="95"/>
</dbReference>
<dbReference type="MINT" id="Q9UJ41"/>
<dbReference type="STRING" id="9606.ENSP00000370208"/>
<dbReference type="TCDB" id="1.F.1.1.5">
    <property type="family name" value="the synaptosomal vesicle fusion pore (svf-pore) family"/>
</dbReference>
<dbReference type="GlyGen" id="Q9UJ41">
    <property type="glycosylation" value="1 site, 1 O-linked glycan (1 site)"/>
</dbReference>
<dbReference type="iPTMnet" id="Q9UJ41"/>
<dbReference type="MetOSite" id="Q9UJ41"/>
<dbReference type="PhosphoSitePlus" id="Q9UJ41"/>
<dbReference type="BioMuta" id="RABGEF1"/>
<dbReference type="DMDM" id="56405102"/>
<dbReference type="jPOST" id="Q9UJ41"/>
<dbReference type="MassIVE" id="Q9UJ41"/>
<dbReference type="PaxDb" id="9606-ENSP00000370208"/>
<dbReference type="PeptideAtlas" id="Q9UJ41"/>
<dbReference type="ProteomicsDB" id="5608"/>
<dbReference type="ProteomicsDB" id="84585">
    <molecule id="Q9UJ41-3"/>
</dbReference>
<dbReference type="Pumba" id="Q9UJ41"/>
<dbReference type="Antibodypedia" id="14115">
    <property type="antibodies" value="160 antibodies from 30 providers"/>
</dbReference>
<dbReference type="DNASU" id="27342"/>
<dbReference type="Ensembl" id="ENST00000284957.9">
    <molecule id="Q9UJ41-2"/>
    <property type="protein sequence ID" value="ENSP00000284957.4"/>
    <property type="gene ID" value="ENSG00000154710.18"/>
</dbReference>
<dbReference type="Ensembl" id="ENST00000450873.6">
    <molecule id="Q9UJ41-2"/>
    <property type="protein sequence ID" value="ENSP00000415815.1"/>
    <property type="gene ID" value="ENSG00000154710.18"/>
</dbReference>
<dbReference type="GeneID" id="27342"/>
<dbReference type="KEGG" id="hsa:27342"/>
<dbReference type="MANE-Select" id="ENST00000284957.9">
    <property type="protein sequence ID" value="ENSP00000284957.4"/>
    <property type="RefSeq nucleotide sequence ID" value="NM_014504.3"/>
    <property type="RefSeq protein sequence ID" value="NP_055319.1"/>
</dbReference>
<dbReference type="UCSC" id="uc003tvh.4">
    <molecule id="Q9UJ41-2"/>
    <property type="organism name" value="human"/>
</dbReference>
<dbReference type="AGR" id="HGNC:17676"/>
<dbReference type="CTD" id="27342"/>
<dbReference type="DisGeNET" id="27342"/>
<dbReference type="GeneCards" id="RABGEF1"/>
<dbReference type="HGNC" id="HGNC:17676">
    <property type="gene designation" value="RABGEF1"/>
</dbReference>
<dbReference type="HPA" id="ENSG00000154710">
    <property type="expression patterns" value="Tissue enhanced (bone)"/>
</dbReference>
<dbReference type="MIM" id="609700">
    <property type="type" value="gene"/>
</dbReference>
<dbReference type="neXtProt" id="NX_Q9UJ41"/>
<dbReference type="OpenTargets" id="ENSG00000154710"/>
<dbReference type="PharmGKB" id="PA134946532"/>
<dbReference type="VEuPathDB" id="HostDB:ENSG00000154710"/>
<dbReference type="GeneTree" id="ENSGT00940000154540"/>
<dbReference type="InParanoid" id="Q9UJ41"/>
<dbReference type="OMA" id="PTITCAT"/>
<dbReference type="OrthoDB" id="300289at2759"/>
<dbReference type="PAN-GO" id="Q9UJ41">
    <property type="GO annotations" value="4 GO annotations based on evolutionary models"/>
</dbReference>
<dbReference type="PhylomeDB" id="Q9UJ41"/>
<dbReference type="TreeFam" id="TF321331"/>
<dbReference type="PathwayCommons" id="Q9UJ41"/>
<dbReference type="Reactome" id="R-HSA-8854214">
    <property type="pathway name" value="TBC/RABGAPs"/>
</dbReference>
<dbReference type="Reactome" id="R-HSA-8876198">
    <property type="pathway name" value="RAB GEFs exchange GTP for GDP on RABs"/>
</dbReference>
<dbReference type="SignaLink" id="Q9UJ41"/>
<dbReference type="SIGNOR" id="Q9UJ41"/>
<dbReference type="BioGRID-ORCS" id="27342">
    <property type="hits" value="36 hits in 1190 CRISPR screens"/>
</dbReference>
<dbReference type="ChiTaRS" id="RABGEF1">
    <property type="organism name" value="human"/>
</dbReference>
<dbReference type="EvolutionaryTrace" id="Q9UJ41"/>
<dbReference type="GeneWiki" id="RABGEF1"/>
<dbReference type="GenomeRNAi" id="27342"/>
<dbReference type="Pharos" id="Q9UJ41">
    <property type="development level" value="Tbio"/>
</dbReference>
<dbReference type="PRO" id="PR:Q9UJ41"/>
<dbReference type="Proteomes" id="UP000005640">
    <property type="component" value="Chromosome 7"/>
</dbReference>
<dbReference type="RNAct" id="Q9UJ41">
    <property type="molecule type" value="protein"/>
</dbReference>
<dbReference type="Bgee" id="ENSG00000154710">
    <property type="expression patterns" value="Expressed in bone marrow and 99 other cell types or tissues"/>
</dbReference>
<dbReference type="ExpressionAtlas" id="Q9UJ41">
    <property type="expression patterns" value="baseline and differential"/>
</dbReference>
<dbReference type="GO" id="GO:0005829">
    <property type="term" value="C:cytosol"/>
    <property type="evidence" value="ECO:0000314"/>
    <property type="project" value="HPA"/>
</dbReference>
<dbReference type="GO" id="GO:0030425">
    <property type="term" value="C:dendrite"/>
    <property type="evidence" value="ECO:0007669"/>
    <property type="project" value="GOC"/>
</dbReference>
<dbReference type="GO" id="GO:0005769">
    <property type="term" value="C:early endosome"/>
    <property type="evidence" value="ECO:0000315"/>
    <property type="project" value="UniProtKB"/>
</dbReference>
<dbReference type="GO" id="GO:0031901">
    <property type="term" value="C:early endosome membrane"/>
    <property type="evidence" value="ECO:0000304"/>
    <property type="project" value="Reactome"/>
</dbReference>
<dbReference type="GO" id="GO:0030139">
    <property type="term" value="C:endocytic vesicle"/>
    <property type="evidence" value="ECO:0000318"/>
    <property type="project" value="GO_Central"/>
</dbReference>
<dbReference type="GO" id="GO:0005730">
    <property type="term" value="C:nucleolus"/>
    <property type="evidence" value="ECO:0000314"/>
    <property type="project" value="HPA"/>
</dbReference>
<dbReference type="GO" id="GO:0098830">
    <property type="term" value="C:presynaptic endosome"/>
    <property type="evidence" value="ECO:0007669"/>
    <property type="project" value="Ensembl"/>
</dbReference>
<dbReference type="GO" id="GO:0055037">
    <property type="term" value="C:recycling endosome"/>
    <property type="evidence" value="ECO:0007669"/>
    <property type="project" value="UniProtKB-SubCell"/>
</dbReference>
<dbReference type="GO" id="GO:0003677">
    <property type="term" value="F:DNA binding"/>
    <property type="evidence" value="ECO:0007669"/>
    <property type="project" value="InterPro"/>
</dbReference>
<dbReference type="GO" id="GO:0005085">
    <property type="term" value="F:guanyl-nucleotide exchange factor activity"/>
    <property type="evidence" value="ECO:0000314"/>
    <property type="project" value="UniProtKB"/>
</dbReference>
<dbReference type="GO" id="GO:0031267">
    <property type="term" value="F:small GTPase binding"/>
    <property type="evidence" value="ECO:0000353"/>
    <property type="project" value="UniProtKB"/>
</dbReference>
<dbReference type="GO" id="GO:0061630">
    <property type="term" value="F:ubiquitin protein ligase activity"/>
    <property type="evidence" value="ECO:0007669"/>
    <property type="project" value="Ensembl"/>
</dbReference>
<dbReference type="GO" id="GO:0008270">
    <property type="term" value="F:zinc ion binding"/>
    <property type="evidence" value="ECO:0007669"/>
    <property type="project" value="UniProtKB-KW"/>
</dbReference>
<dbReference type="GO" id="GO:0098935">
    <property type="term" value="P:dendritic transport"/>
    <property type="evidence" value="ECO:0007669"/>
    <property type="project" value="Ensembl"/>
</dbReference>
<dbReference type="GO" id="GO:0038109">
    <property type="term" value="P:Kit signaling pathway"/>
    <property type="evidence" value="ECO:0007669"/>
    <property type="project" value="Ensembl"/>
</dbReference>
<dbReference type="GO" id="GO:0043303">
    <property type="term" value="P:mast cell degranulation"/>
    <property type="evidence" value="ECO:0007669"/>
    <property type="project" value="Ensembl"/>
</dbReference>
<dbReference type="GO" id="GO:0097531">
    <property type="term" value="P:mast cell migration"/>
    <property type="evidence" value="ECO:0007669"/>
    <property type="project" value="Ensembl"/>
</dbReference>
<dbReference type="GO" id="GO:0050728">
    <property type="term" value="P:negative regulation of inflammatory response"/>
    <property type="evidence" value="ECO:0007669"/>
    <property type="project" value="Ensembl"/>
</dbReference>
<dbReference type="GO" id="GO:0032715">
    <property type="term" value="P:negative regulation of interleukin-6 production"/>
    <property type="evidence" value="ECO:0007669"/>
    <property type="project" value="Ensembl"/>
</dbReference>
<dbReference type="GO" id="GO:1900235">
    <property type="term" value="P:negative regulation of Kit signaling pathway"/>
    <property type="evidence" value="ECO:0007669"/>
    <property type="project" value="Ensembl"/>
</dbReference>
<dbReference type="GO" id="GO:0002686">
    <property type="term" value="P:negative regulation of leukocyte migration"/>
    <property type="evidence" value="ECO:0007669"/>
    <property type="project" value="Ensembl"/>
</dbReference>
<dbReference type="GO" id="GO:0033004">
    <property type="term" value="P:negative regulation of mast cell activation"/>
    <property type="evidence" value="ECO:0007669"/>
    <property type="project" value="Ensembl"/>
</dbReference>
<dbReference type="GO" id="GO:0032764">
    <property type="term" value="P:negative regulation of mast cell cytokine production"/>
    <property type="evidence" value="ECO:0007669"/>
    <property type="project" value="Ensembl"/>
</dbReference>
<dbReference type="GO" id="GO:0043305">
    <property type="term" value="P:negative regulation of mast cell degranulation"/>
    <property type="evidence" value="ECO:0007669"/>
    <property type="project" value="Ensembl"/>
</dbReference>
<dbReference type="GO" id="GO:0046580">
    <property type="term" value="P:negative regulation of Ras protein signal transduction"/>
    <property type="evidence" value="ECO:0007669"/>
    <property type="project" value="Ensembl"/>
</dbReference>
<dbReference type="GO" id="GO:0048261">
    <property type="term" value="P:negative regulation of receptor-mediated endocytosis"/>
    <property type="evidence" value="ECO:0007669"/>
    <property type="project" value="Ensembl"/>
</dbReference>
<dbReference type="GO" id="GO:0006612">
    <property type="term" value="P:protein targeting to membrane"/>
    <property type="evidence" value="ECO:0000315"/>
    <property type="project" value="UniProtKB"/>
</dbReference>
<dbReference type="GO" id="GO:0015031">
    <property type="term" value="P:protein transport"/>
    <property type="evidence" value="ECO:0007669"/>
    <property type="project" value="UniProtKB-KW"/>
</dbReference>
<dbReference type="GO" id="GO:0007265">
    <property type="term" value="P:Ras protein signal transduction"/>
    <property type="evidence" value="ECO:0007669"/>
    <property type="project" value="Ensembl"/>
</dbReference>
<dbReference type="GO" id="GO:0006898">
    <property type="term" value="P:receptor-mediated endocytosis"/>
    <property type="evidence" value="ECO:0007669"/>
    <property type="project" value="Ensembl"/>
</dbReference>
<dbReference type="GO" id="GO:0060368">
    <property type="term" value="P:regulation of Fc receptor mediated stimulatory signaling pathway"/>
    <property type="evidence" value="ECO:0007669"/>
    <property type="project" value="Ensembl"/>
</dbReference>
<dbReference type="FunFam" id="1.10.246.120:FF:000002">
    <property type="entry name" value="rab5 GDP/GTP exchange factor isoform X1"/>
    <property type="match status" value="1"/>
</dbReference>
<dbReference type="FunFam" id="1.20.5.4770:FF:000002">
    <property type="entry name" value="rab5 GDP/GTP exchange factor isoform X1"/>
    <property type="match status" value="1"/>
</dbReference>
<dbReference type="FunFam" id="1.20.1050.80:FF:000003">
    <property type="entry name" value="rab5 GDP/GTP exchange factor isoform X2"/>
    <property type="match status" value="1"/>
</dbReference>
<dbReference type="Gene3D" id="1.10.246.120">
    <property type="match status" value="1"/>
</dbReference>
<dbReference type="Gene3D" id="1.20.5.4770">
    <property type="match status" value="1"/>
</dbReference>
<dbReference type="Gene3D" id="1.20.1050.80">
    <property type="entry name" value="VPS9 domain"/>
    <property type="match status" value="1"/>
</dbReference>
<dbReference type="InterPro" id="IPR041545">
    <property type="entry name" value="DUF5601"/>
</dbReference>
<dbReference type="InterPro" id="IPR003123">
    <property type="entry name" value="VPS9"/>
</dbReference>
<dbReference type="InterPro" id="IPR045046">
    <property type="entry name" value="Vps9-like"/>
</dbReference>
<dbReference type="InterPro" id="IPR037191">
    <property type="entry name" value="VPS9_dom_sf"/>
</dbReference>
<dbReference type="InterPro" id="IPR002653">
    <property type="entry name" value="Znf_A20"/>
</dbReference>
<dbReference type="PANTHER" id="PTHR23101">
    <property type="entry name" value="RAB GDP/GTP EXCHANGE FACTOR"/>
    <property type="match status" value="1"/>
</dbReference>
<dbReference type="PANTHER" id="PTHR23101:SF126">
    <property type="entry name" value="RAB5 GDP_GTP EXCHANGE FACTOR"/>
    <property type="match status" value="1"/>
</dbReference>
<dbReference type="Pfam" id="PF18151">
    <property type="entry name" value="DUF5601"/>
    <property type="match status" value="1"/>
</dbReference>
<dbReference type="Pfam" id="PF02204">
    <property type="entry name" value="VPS9"/>
    <property type="match status" value="1"/>
</dbReference>
<dbReference type="Pfam" id="PF01754">
    <property type="entry name" value="zf-A20"/>
    <property type="match status" value="1"/>
</dbReference>
<dbReference type="SMART" id="SM00167">
    <property type="entry name" value="VPS9"/>
    <property type="match status" value="1"/>
</dbReference>
<dbReference type="SMART" id="SM00259">
    <property type="entry name" value="ZnF_A20"/>
    <property type="match status" value="1"/>
</dbReference>
<dbReference type="SUPFAM" id="SSF57716">
    <property type="entry name" value="Glucocorticoid receptor-like (DNA-binding domain)"/>
    <property type="match status" value="1"/>
</dbReference>
<dbReference type="SUPFAM" id="SSF109993">
    <property type="entry name" value="VPS9 domain"/>
    <property type="match status" value="1"/>
</dbReference>
<dbReference type="PROSITE" id="PS51205">
    <property type="entry name" value="VPS9"/>
    <property type="match status" value="1"/>
</dbReference>
<dbReference type="PROSITE" id="PS51036">
    <property type="entry name" value="ZF_A20"/>
    <property type="match status" value="1"/>
</dbReference>
<keyword id="KW-0002">3D-structure</keyword>
<keyword id="KW-0007">Acetylation</keyword>
<keyword id="KW-0025">Alternative splicing</keyword>
<keyword id="KW-0963">Cytoplasm</keyword>
<keyword id="KW-0254">Endocytosis</keyword>
<keyword id="KW-0967">Endosome</keyword>
<keyword id="KW-0479">Metal-binding</keyword>
<keyword id="KW-0597">Phosphoprotein</keyword>
<keyword id="KW-0653">Protein transport</keyword>
<keyword id="KW-1267">Proteomics identification</keyword>
<keyword id="KW-1185">Reference proteome</keyword>
<keyword id="KW-0813">Transport</keyword>
<keyword id="KW-0832">Ubl conjugation</keyword>
<keyword id="KW-0833">Ubl conjugation pathway</keyword>
<keyword id="KW-0862">Zinc</keyword>
<keyword id="KW-0863">Zinc-finger</keyword>
<sequence>MSLKSERRGIHVDQSDLLCKKGCGYYGNPAWQGFCSKCWREEYHKARQKQIQEDWELAERLQREEEEAFASSQSSQGAQSLTFSKFEEKKTNEKTRKVTTVKKFFSASSRVGSKKEIQEAKAPSPSINRQTSIETDRVSKEFIEFLKTFHKTGQEIYKQTKLFLEGMHYKRDLSIEEQSECAQDFYHNVAERMQTRGKVPPERVEKIMDQIEKYIMTRLYKYVFCPETTDDEKKDLAIQKRIRALRWVTPQMLCVPVNEDIPEVSDMVVKAITDIIEMDSKRVPRDKLACITKCSKHIFNAIKITKNEPASADDFLPTLIYIVLKGNPPRLQSNIQYITRFCNPSRLMTGEDGYYFTNLCCAVAFIEKLDAQSLNLSQEDFDRYMSGQTSPRKQEAESWSPDACLGVKQMYKNLDLLSQLNERQERIMNEAKKLEKDLIDWTDGIAREVQDIVEKYPLEIKPPNQPLAAIDSENVENDKLPPPLQPQVYAG</sequence>
<comment type="function">
    <text evidence="1 6 8 11">Rab effector protein acting as linker between gamma-adaptin, RAB4A or RAB5A. Involved in endocytic membrane fusion and membrane trafficking of recycling endosomes. Stimulates nucleotide exchange on RAB5A. Can act as a ubiquitin ligase (By similarity).</text>
</comment>
<comment type="subunit">
    <text evidence="1 6 7 8 9 10 11">Interacts with RGS14; the interaction is GTP-dependent (By similarity). Heterodimer with RABEP1. The heterodimer binds RAB4A and RAB5A that have been activated by GTP-binding. Interacts with RAB21, and with 100-fold lower affinity also with RAB22. Binds TSC2, GGA1, GGA2, GGA3, AP1G1 and AP1G2. Interacts with ubiquitinated EGFR.</text>
</comment>
<comment type="interaction">
    <interactant intactId="EBI-913954">
        <id>Q9UJ41</id>
    </interactant>
    <interactant intactId="EBI-465781">
        <id>Q9UL45</id>
        <label>BLOC1S6</label>
    </interactant>
    <organismsDiffer>false</organismsDiffer>
    <experiments>3</experiments>
</comment>
<comment type="interaction">
    <interactant intactId="EBI-913954">
        <id>Q9UJ41</id>
    </interactant>
    <interactant intactId="EBI-5654244">
        <id>Q9C0C6</id>
        <label>CIPC</label>
    </interactant>
    <organismsDiffer>false</organismsDiffer>
    <experiments>3</experiments>
</comment>
<comment type="interaction">
    <interactant intactId="EBI-913954">
        <id>Q9UJ41</id>
    </interactant>
    <interactant intactId="EBI-724310">
        <id>Q15038</id>
        <label>DAZAP2</label>
    </interactant>
    <organismsDiffer>false</organismsDiffer>
    <experiments>3</experiments>
</comment>
<comment type="interaction">
    <interactant intactId="EBI-913954">
        <id>Q9UJ41</id>
    </interactant>
    <interactant intactId="EBI-297353">
        <id>P00533</id>
        <label>EGFR</label>
    </interactant>
    <organismsDiffer>false</organismsDiffer>
    <experiments>4</experiments>
</comment>
<comment type="interaction">
    <interactant intactId="EBI-913954">
        <id>Q9UJ41</id>
    </interactant>
    <interactant intactId="EBI-739657">
        <id>Q9BQD3</id>
        <label>KXD1</label>
    </interactant>
    <organismsDiffer>false</organismsDiffer>
    <experiments>2</experiments>
</comment>
<comment type="interaction">
    <interactant intactId="EBI-913954">
        <id>Q9UJ41</id>
    </interactant>
    <interactant intactId="EBI-447043">
        <id>Q15276</id>
        <label>RABEP1</label>
    </interactant>
    <organismsDiffer>false</organismsDiffer>
    <experiments>3</experiments>
</comment>
<comment type="interaction">
    <interactant intactId="EBI-913954">
        <id>Q9UJ41</id>
    </interactant>
    <interactant intactId="EBI-10176734">
        <id>D3DUQ6</id>
        <label>TEAD4</label>
    </interactant>
    <organismsDiffer>false</organismsDiffer>
    <experiments>3</experiments>
</comment>
<comment type="interaction">
    <interactant intactId="EBI-913954">
        <id>Q9UJ41</id>
    </interactant>
    <interactant intactId="EBI-1765605">
        <id>Q96FV9</id>
        <label>THOC1</label>
    </interactant>
    <organismsDiffer>false</organismsDiffer>
    <experiments>3</experiments>
</comment>
<comment type="interaction">
    <interactant intactId="EBI-913954">
        <id>Q9UJ41</id>
    </interactant>
    <interactant intactId="EBI-2342111">
        <id>Q9C019</id>
        <label>TRIM15</label>
    </interactant>
    <organismsDiffer>false</organismsDiffer>
    <experiments>3</experiments>
</comment>
<comment type="interaction">
    <interactant intactId="EBI-913954">
        <id>Q9UJ41</id>
    </interactant>
    <interactant intactId="EBI-2130429">
        <id>Q9BYV2</id>
        <label>TRIM54</label>
    </interactant>
    <organismsDiffer>false</organismsDiffer>
    <experiments>3</experiments>
</comment>
<comment type="interaction">
    <interactant intactId="EBI-913954">
        <id>Q9UJ41</id>
    </interactant>
    <interactant intactId="EBI-2932492">
        <id>Q99757</id>
        <label>TXN2</label>
    </interactant>
    <organismsDiffer>false</organismsDiffer>
    <experiments>3</experiments>
</comment>
<comment type="interaction">
    <interactant intactId="EBI-913954">
        <id>Q9UJ41</id>
    </interactant>
    <interactant intactId="EBI-413034">
        <id>P0CG47</id>
        <label>UBB</label>
    </interactant>
    <organismsDiffer>false</organismsDiffer>
    <experiments>6</experiments>
</comment>
<comment type="interaction">
    <interactant intactId="EBI-913954">
        <id>Q9UJ41</id>
    </interactant>
    <interactant intactId="EBI-745483">
        <id>Q96C32</id>
        <label>UBC</label>
    </interactant>
    <organismsDiffer>false</organismsDiffer>
    <experiments>3</experiments>
</comment>
<comment type="interaction">
    <interactant intactId="EBI-913954">
        <id>Q9UJ41</id>
    </interactant>
    <interactant intactId="EBI-740767">
        <id>Q53FD0</id>
        <label>ZC2HC1C</label>
    </interactant>
    <organismsDiffer>false</organismsDiffer>
    <experiments>3</experiments>
</comment>
<comment type="interaction">
    <interactant intactId="EBI-913954">
        <id>Q9UJ41</id>
    </interactant>
    <interactant intactId="EBI-413053">
        <id>P62990</id>
        <label>UBC</label>
    </interactant>
    <organismsDiffer>true</organismsDiffer>
    <experiments>2</experiments>
</comment>
<comment type="interaction">
    <interactant intactId="EBI-6448458">
        <id>Q9UJ41-2</id>
    </interactant>
    <interactant intactId="EBI-1056039">
        <id>Q9UL25</id>
        <label>RAB21</label>
    </interactant>
    <organismsDiffer>false</organismsDiffer>
    <experiments>2</experiments>
</comment>
<comment type="interaction">
    <interactant intactId="EBI-6448458">
        <id>Q9UJ41-2</id>
    </interactant>
    <interactant intactId="EBI-447043">
        <id>Q15276</id>
        <label>RABEP1</label>
    </interactant>
    <organismsDiffer>false</organismsDiffer>
    <experiments>2</experiments>
</comment>
<comment type="interaction">
    <interactant intactId="EBI-14093916">
        <id>Q9UJ41-4</id>
    </interactant>
    <interactant intactId="EBI-11096309">
        <id>Q9NYB9-2</id>
        <label>ABI2</label>
    </interactant>
    <organismsDiffer>false</organismsDiffer>
    <experiments>3</experiments>
</comment>
<comment type="interaction">
    <interactant intactId="EBI-14093916">
        <id>Q9UJ41-4</id>
    </interactant>
    <interactant intactId="EBI-17439331">
        <id>Q8N6D5</id>
        <label>ANKRD29</label>
    </interactant>
    <organismsDiffer>false</organismsDiffer>
    <experiments>3</experiments>
</comment>
<comment type="interaction">
    <interactant intactId="EBI-14093916">
        <id>Q9UJ41-4</id>
    </interactant>
    <interactant intactId="EBI-2875665">
        <id>Q96B67</id>
        <label>ARRDC3</label>
    </interactant>
    <organismsDiffer>false</organismsDiffer>
    <experiments>3</experiments>
</comment>
<comment type="interaction">
    <interactant intactId="EBI-14093916">
        <id>Q9UJ41-4</id>
    </interactant>
    <interactant intactId="EBI-465781">
        <id>Q9UL45</id>
        <label>BLOC1S6</label>
    </interactant>
    <organismsDiffer>false</organismsDiffer>
    <experiments>6</experiments>
</comment>
<comment type="interaction">
    <interactant intactId="EBI-14093916">
        <id>Q9UJ41-4</id>
    </interactant>
    <interactant intactId="EBI-10175300">
        <id>Q8TD31-3</id>
        <label>CCHCR1</label>
    </interactant>
    <organismsDiffer>false</organismsDiffer>
    <experiments>3</experiments>
</comment>
<comment type="interaction">
    <interactant intactId="EBI-14093916">
        <id>Q9UJ41-4</id>
    </interactant>
    <interactant intactId="EBI-295634">
        <id>Q16543</id>
        <label>CDC37</label>
    </interactant>
    <organismsDiffer>false</organismsDiffer>
    <experiments>3</experiments>
</comment>
<comment type="interaction">
    <interactant intactId="EBI-14093916">
        <id>Q9UJ41-4</id>
    </interactant>
    <interactant intactId="EBI-724310">
        <id>Q15038</id>
        <label>DAZAP2</label>
    </interactant>
    <organismsDiffer>false</organismsDiffer>
    <experiments>6</experiments>
</comment>
<comment type="interaction">
    <interactant intactId="EBI-14093916">
        <id>Q9UJ41-4</id>
    </interactant>
    <interactant intactId="EBI-25840379">
        <id>Q14203-5</id>
        <label>DCTN1</label>
    </interactant>
    <organismsDiffer>false</organismsDiffer>
    <experiments>3</experiments>
</comment>
<comment type="interaction">
    <interactant intactId="EBI-14093916">
        <id>Q9UJ41-4</id>
    </interactant>
    <interactant intactId="EBI-715074">
        <id>Q13561</id>
        <label>DCTN2</label>
    </interactant>
    <organismsDiffer>false</organismsDiffer>
    <experiments>3</experiments>
</comment>
<comment type="interaction">
    <interactant intactId="EBI-14093916">
        <id>Q9UJ41-4</id>
    </interactant>
    <interactant intactId="EBI-11748557">
        <id>Q9Y6C2-2</id>
        <label>EMILIN1</label>
    </interactant>
    <organismsDiffer>false</organismsDiffer>
    <experiments>3</experiments>
</comment>
<comment type="interaction">
    <interactant intactId="EBI-14093916">
        <id>Q9UJ41-4</id>
    </interactant>
    <interactant intactId="EBI-473189">
        <id>Q96D09</id>
        <label>GPRASP2</label>
    </interactant>
    <organismsDiffer>false</organismsDiffer>
    <experiments>3</experiments>
</comment>
<comment type="interaction">
    <interactant intactId="EBI-14093916">
        <id>Q9UJ41-4</id>
    </interactant>
    <interactant intactId="EBI-10961706">
        <id>Q96ED9-2</id>
        <label>HOOK2</label>
    </interactant>
    <organismsDiffer>false</organismsDiffer>
    <experiments>3</experiments>
</comment>
<comment type="interaction">
    <interactant intactId="EBI-14093916">
        <id>Q9UJ41-4</id>
    </interactant>
    <interactant intactId="EBI-8638439">
        <id>Q8IYA8</id>
        <label>IHO1</label>
    </interactant>
    <organismsDiffer>false</organismsDiffer>
    <experiments>3</experiments>
</comment>
<comment type="interaction">
    <interactant intactId="EBI-14093916">
        <id>Q9UJ41-4</id>
    </interactant>
    <interactant intactId="EBI-10172526">
        <id>Q9UJV3-2</id>
        <label>MID2</label>
    </interactant>
    <organismsDiffer>false</organismsDiffer>
    <experiments>3</experiments>
</comment>
<comment type="interaction">
    <interactant intactId="EBI-14093916">
        <id>Q9UJ41-4</id>
    </interactant>
    <interactant intactId="EBI-536879">
        <id>O43482</id>
        <label>OIP5</label>
    </interactant>
    <organismsDiffer>false</organismsDiffer>
    <experiments>3</experiments>
</comment>
<comment type="interaction">
    <interactant intactId="EBI-14093916">
        <id>Q9UJ41-4</id>
    </interactant>
    <interactant intactId="EBI-746453">
        <id>P54725</id>
        <label>RAD23A</label>
    </interactant>
    <organismsDiffer>false</organismsDiffer>
    <experiments>3</experiments>
</comment>
<comment type="interaction">
    <interactant intactId="EBI-14093916">
        <id>Q9UJ41-4</id>
    </interactant>
    <interactant intactId="EBI-3437896">
        <id>Q86YV0</id>
        <label>RASAL3</label>
    </interactant>
    <organismsDiffer>false</organismsDiffer>
    <experiments>3</experiments>
</comment>
<comment type="interaction">
    <interactant intactId="EBI-14093916">
        <id>Q9UJ41-4</id>
    </interactant>
    <interactant intactId="EBI-396669">
        <id>Q9Y3C5</id>
        <label>RNF11</label>
    </interactant>
    <organismsDiffer>false</organismsDiffer>
    <experiments>3</experiments>
</comment>
<comment type="interaction">
    <interactant intactId="EBI-14093916">
        <id>Q9UJ41-4</id>
    </interactant>
    <interactant intactId="EBI-6117072">
        <id>Q86VW0</id>
        <label>SESTD1</label>
    </interactant>
    <organismsDiffer>false</organismsDiffer>
    <experiments>3</experiments>
</comment>
<comment type="interaction">
    <interactant intactId="EBI-14093916">
        <id>Q9UJ41-4</id>
    </interactant>
    <interactant intactId="EBI-296723">
        <id>O95295</id>
        <label>SNAPIN</label>
    </interactant>
    <organismsDiffer>false</organismsDiffer>
    <experiments>3</experiments>
</comment>
<comment type="interaction">
    <interactant intactId="EBI-14093916">
        <id>Q9UJ41-4</id>
    </interactant>
    <interactant intactId="EBI-985879">
        <id>P37840</id>
        <label>SNCA</label>
    </interactant>
    <organismsDiffer>false</organismsDiffer>
    <experiments>3</experiments>
</comment>
<comment type="interaction">
    <interactant intactId="EBI-14093916">
        <id>Q9UJ41-4</id>
    </interactant>
    <interactant intactId="EBI-2643803">
        <id>Q8N0X7</id>
        <label>SPART</label>
    </interactant>
    <organismsDiffer>false</organismsDiffer>
    <experiments>3</experiments>
</comment>
<comment type="interaction">
    <interactant intactId="EBI-14093916">
        <id>Q9UJ41-4</id>
    </interactant>
    <interactant intactId="EBI-10295431">
        <id>Q99909</id>
        <label>SSX3</label>
    </interactant>
    <organismsDiffer>false</organismsDiffer>
    <experiments>3</experiments>
</comment>
<comment type="interaction">
    <interactant intactId="EBI-14093916">
        <id>Q9UJ41-4</id>
    </interactant>
    <interactant intactId="EBI-740781">
        <id>Q9BT92</id>
        <label>TCHP</label>
    </interactant>
    <organismsDiffer>false</organismsDiffer>
    <experiments>3</experiments>
</comment>
<comment type="interaction">
    <interactant intactId="EBI-14093916">
        <id>Q9UJ41-4</id>
    </interactant>
    <interactant intactId="EBI-2130429">
        <id>Q9BYV2</id>
        <label>TRIM54</label>
    </interactant>
    <organismsDiffer>false</organismsDiffer>
    <experiments>3</experiments>
</comment>
<comment type="interaction">
    <interactant intactId="EBI-14093916">
        <id>Q9UJ41-4</id>
    </interactant>
    <interactant intactId="EBI-357304">
        <id>P62987</id>
        <label>UBA52</label>
    </interactant>
    <organismsDiffer>false</organismsDiffer>
    <experiments>3</experiments>
</comment>
<comment type="subcellular location">
    <subcellularLocation>
        <location evidence="7">Cytoplasm</location>
    </subcellularLocation>
    <subcellularLocation>
        <location evidence="7">Early endosome</location>
    </subcellularLocation>
    <subcellularLocation>
        <location evidence="7">Recycling endosome</location>
    </subcellularLocation>
</comment>
<comment type="alternative products">
    <event type="alternative splicing"/>
    <isoform>
        <id>Q9UJ41-2</id>
        <name>1</name>
        <sequence type="displayed"/>
    </isoform>
    <isoform>
        <id>Q9UJ41-3</id>
        <name>2</name>
        <name>Long</name>
        <sequence type="described" ref="VSP_060131"/>
    </isoform>
    <isoform>
        <id>Q9UJ41-4</id>
        <name>3</name>
        <sequence type="described" ref="VSP_060130"/>
    </isoform>
</comment>
<comment type="PTM">
    <text>Monoubiquitinated.</text>
</comment>
<comment type="sequence caution" evidence="12">
    <conflict type="miscellaneous discrepancy">
        <sequence resource="EMBL-CDS" id="BAC87138"/>
    </conflict>
    <text>Readthrough transcript KCTD7-RABGEF1.</text>
</comment>
<protein>
    <recommendedName>
        <fullName>Rab5 GDP/GTP exchange factor</fullName>
    </recommendedName>
    <alternativeName>
        <fullName>RAP1</fullName>
    </alternativeName>
    <alternativeName>
        <fullName>Rabaptin-5-associated exchange factor for Rab5</fullName>
    </alternativeName>
    <alternativeName>
        <fullName>Rabex-5</fullName>
    </alternativeName>
</protein>
<proteinExistence type="evidence at protein level"/>
<name>RABX5_HUMAN</name>
<gene>
    <name type="primary">RABGEF1</name>
    <name type="synonym">RABEX5</name>
</gene>
<organism>
    <name type="scientific">Homo sapiens</name>
    <name type="common">Human</name>
    <dbReference type="NCBI Taxonomy" id="9606"/>
    <lineage>
        <taxon>Eukaryota</taxon>
        <taxon>Metazoa</taxon>
        <taxon>Chordata</taxon>
        <taxon>Craniata</taxon>
        <taxon>Vertebrata</taxon>
        <taxon>Euteleostomi</taxon>
        <taxon>Mammalia</taxon>
        <taxon>Eutheria</taxon>
        <taxon>Euarchontoglires</taxon>
        <taxon>Primates</taxon>
        <taxon>Haplorrhini</taxon>
        <taxon>Catarrhini</taxon>
        <taxon>Hominidae</taxon>
        <taxon>Homo</taxon>
    </lineage>
</organism>
<evidence type="ECO:0000250" key="1"/>
<evidence type="ECO:0000250" key="2">
    <source>
        <dbReference type="UniProtKB" id="Q9JM13"/>
    </source>
</evidence>
<evidence type="ECO:0000255" key="3">
    <source>
        <dbReference type="PROSITE-ProRule" id="PRU00451"/>
    </source>
</evidence>
<evidence type="ECO:0000255" key="4">
    <source>
        <dbReference type="PROSITE-ProRule" id="PRU00550"/>
    </source>
</evidence>
<evidence type="ECO:0000256" key="5">
    <source>
        <dbReference type="SAM" id="MobiDB-lite"/>
    </source>
</evidence>
<evidence type="ECO:0000269" key="6">
    <source>
    </source>
</evidence>
<evidence type="ECO:0000269" key="7">
    <source>
    </source>
</evidence>
<evidence type="ECO:0000269" key="8">
    <source>
    </source>
</evidence>
<evidence type="ECO:0000269" key="9">
    <source>
    </source>
</evidence>
<evidence type="ECO:0000269" key="10">
    <source>
    </source>
</evidence>
<evidence type="ECO:0000269" key="11">
    <source>
    </source>
</evidence>
<evidence type="ECO:0000305" key="12"/>
<evidence type="ECO:0007744" key="13">
    <source>
    </source>
</evidence>
<evidence type="ECO:0007744" key="14">
    <source>
    </source>
</evidence>
<evidence type="ECO:0007744" key="15">
    <source>
    </source>
</evidence>
<evidence type="ECO:0007744" key="16">
    <source>
    </source>
</evidence>
<evidence type="ECO:0007744" key="17">
    <source>
    </source>
</evidence>
<evidence type="ECO:0007829" key="18">
    <source>
        <dbReference type="PDB" id="2C7N"/>
    </source>
</evidence>
<evidence type="ECO:0007829" key="19">
    <source>
        <dbReference type="PDB" id="2OT3"/>
    </source>
</evidence>
<evidence type="ECO:0007829" key="20">
    <source>
        <dbReference type="PDB" id="4N3X"/>
    </source>
</evidence>